<feature type="chain" id="PRO_0000123232" description="Small ribosomal subunit protein uS11">
    <location>
        <begin position="1"/>
        <end position="127"/>
    </location>
</feature>
<evidence type="ECO:0000255" key="1">
    <source>
        <dbReference type="HAMAP-Rule" id="MF_01310"/>
    </source>
</evidence>
<evidence type="ECO:0000305" key="2"/>
<accession>P59378</accession>
<comment type="function">
    <text evidence="1">Located on the platform of the 30S subunit, it bridges several disparate RNA helices of the 16S rRNA. Forms part of the Shine-Dalgarno cleft in the 70S ribosome.</text>
</comment>
<comment type="subunit">
    <text evidence="1">Part of the 30S ribosomal subunit. Interacts with proteins S7 and S18. Binds to IF-3.</text>
</comment>
<comment type="similarity">
    <text evidence="1">Belongs to the universal ribosomal protein uS11 family.</text>
</comment>
<proteinExistence type="inferred from homology"/>
<keyword id="KW-1185">Reference proteome</keyword>
<keyword id="KW-0687">Ribonucleoprotein</keyword>
<keyword id="KW-0689">Ribosomal protein</keyword>
<keyword id="KW-0694">RNA-binding</keyword>
<keyword id="KW-0699">rRNA-binding</keyword>
<sequence length="127" mass="13399">MAKPTRKRRVKKNIESGIAHIHATFNNTIVMITDVHGNALAWSSAGALGFKGSRKSTPFAAQMAAEAAAKSAQEHGLKTVEVTVKGPGSGRESAIRALAAAGLEVTSIRDVTPVPHNGARPPKRRRV</sequence>
<name>RS11_STRMU</name>
<reference key="1">
    <citation type="journal article" date="2002" name="Proc. Natl. Acad. Sci. U.S.A.">
        <title>Genome sequence of Streptococcus mutans UA159, a cariogenic dental pathogen.</title>
        <authorList>
            <person name="Ajdic D.J."/>
            <person name="McShan W.M."/>
            <person name="McLaughlin R.E."/>
            <person name="Savic G."/>
            <person name="Chang J."/>
            <person name="Carson M.B."/>
            <person name="Primeaux C."/>
            <person name="Tian R."/>
            <person name="Kenton S."/>
            <person name="Jia H.G."/>
            <person name="Lin S.P."/>
            <person name="Qian Y."/>
            <person name="Li S."/>
            <person name="Zhu H."/>
            <person name="Najar F.Z."/>
            <person name="Lai H."/>
            <person name="White J."/>
            <person name="Roe B.A."/>
            <person name="Ferretti J.J."/>
        </authorList>
    </citation>
    <scope>NUCLEOTIDE SEQUENCE [LARGE SCALE GENOMIC DNA]</scope>
    <source>
        <strain>ATCC 700610 / UA159</strain>
    </source>
</reference>
<dbReference type="EMBL" id="AE014133">
    <property type="protein sequence ID" value="AAN59605.1"/>
    <property type="molecule type" value="Genomic_DNA"/>
</dbReference>
<dbReference type="RefSeq" id="NP_722299.1">
    <property type="nucleotide sequence ID" value="NC_004350.2"/>
</dbReference>
<dbReference type="RefSeq" id="WP_002262316.1">
    <property type="nucleotide sequence ID" value="NC_004350.2"/>
</dbReference>
<dbReference type="SMR" id="P59378"/>
<dbReference type="STRING" id="210007.SMU_2002"/>
<dbReference type="GeneID" id="93860204"/>
<dbReference type="KEGG" id="smu:SMU_2002"/>
<dbReference type="PATRIC" id="fig|210007.7.peg.1782"/>
<dbReference type="eggNOG" id="COG0100">
    <property type="taxonomic scope" value="Bacteria"/>
</dbReference>
<dbReference type="HOGENOM" id="CLU_072439_5_0_9"/>
<dbReference type="OrthoDB" id="9806415at2"/>
<dbReference type="PhylomeDB" id="P59378"/>
<dbReference type="Proteomes" id="UP000002512">
    <property type="component" value="Chromosome"/>
</dbReference>
<dbReference type="GO" id="GO:1990904">
    <property type="term" value="C:ribonucleoprotein complex"/>
    <property type="evidence" value="ECO:0007669"/>
    <property type="project" value="UniProtKB-KW"/>
</dbReference>
<dbReference type="GO" id="GO:0005840">
    <property type="term" value="C:ribosome"/>
    <property type="evidence" value="ECO:0007669"/>
    <property type="project" value="UniProtKB-KW"/>
</dbReference>
<dbReference type="GO" id="GO:0019843">
    <property type="term" value="F:rRNA binding"/>
    <property type="evidence" value="ECO:0007669"/>
    <property type="project" value="UniProtKB-UniRule"/>
</dbReference>
<dbReference type="GO" id="GO:0003735">
    <property type="term" value="F:structural constituent of ribosome"/>
    <property type="evidence" value="ECO:0007669"/>
    <property type="project" value="InterPro"/>
</dbReference>
<dbReference type="GO" id="GO:0006412">
    <property type="term" value="P:translation"/>
    <property type="evidence" value="ECO:0007669"/>
    <property type="project" value="UniProtKB-UniRule"/>
</dbReference>
<dbReference type="FunFam" id="3.30.420.80:FF:000001">
    <property type="entry name" value="30S ribosomal protein S11"/>
    <property type="match status" value="1"/>
</dbReference>
<dbReference type="Gene3D" id="3.30.420.80">
    <property type="entry name" value="Ribosomal protein S11"/>
    <property type="match status" value="1"/>
</dbReference>
<dbReference type="HAMAP" id="MF_01310">
    <property type="entry name" value="Ribosomal_uS11"/>
    <property type="match status" value="1"/>
</dbReference>
<dbReference type="InterPro" id="IPR001971">
    <property type="entry name" value="Ribosomal_uS11"/>
</dbReference>
<dbReference type="InterPro" id="IPR019981">
    <property type="entry name" value="Ribosomal_uS11_bac-type"/>
</dbReference>
<dbReference type="InterPro" id="IPR018102">
    <property type="entry name" value="Ribosomal_uS11_CS"/>
</dbReference>
<dbReference type="InterPro" id="IPR036967">
    <property type="entry name" value="Ribosomal_uS11_sf"/>
</dbReference>
<dbReference type="NCBIfam" id="NF003698">
    <property type="entry name" value="PRK05309.1"/>
    <property type="match status" value="1"/>
</dbReference>
<dbReference type="NCBIfam" id="TIGR03632">
    <property type="entry name" value="uS11_bact"/>
    <property type="match status" value="1"/>
</dbReference>
<dbReference type="PANTHER" id="PTHR11759">
    <property type="entry name" value="40S RIBOSOMAL PROTEIN S14/30S RIBOSOMAL PROTEIN S11"/>
    <property type="match status" value="1"/>
</dbReference>
<dbReference type="Pfam" id="PF00411">
    <property type="entry name" value="Ribosomal_S11"/>
    <property type="match status" value="1"/>
</dbReference>
<dbReference type="PIRSF" id="PIRSF002131">
    <property type="entry name" value="Ribosomal_S11"/>
    <property type="match status" value="1"/>
</dbReference>
<dbReference type="SUPFAM" id="SSF53137">
    <property type="entry name" value="Translational machinery components"/>
    <property type="match status" value="1"/>
</dbReference>
<dbReference type="PROSITE" id="PS00054">
    <property type="entry name" value="RIBOSOMAL_S11"/>
    <property type="match status" value="1"/>
</dbReference>
<gene>
    <name evidence="1" type="primary">rpsK</name>
    <name type="synonym">rs11</name>
    <name type="ordered locus">SMU_2002</name>
</gene>
<protein>
    <recommendedName>
        <fullName evidence="1">Small ribosomal subunit protein uS11</fullName>
    </recommendedName>
    <alternativeName>
        <fullName evidence="2">30S ribosomal protein S11</fullName>
    </alternativeName>
</protein>
<organism>
    <name type="scientific">Streptococcus mutans serotype c (strain ATCC 700610 / UA159)</name>
    <dbReference type="NCBI Taxonomy" id="210007"/>
    <lineage>
        <taxon>Bacteria</taxon>
        <taxon>Bacillati</taxon>
        <taxon>Bacillota</taxon>
        <taxon>Bacilli</taxon>
        <taxon>Lactobacillales</taxon>
        <taxon>Streptococcaceae</taxon>
        <taxon>Streptococcus</taxon>
    </lineage>
</organism>